<feature type="signal peptide" evidence="4">
    <location>
        <begin position="1"/>
        <end position="22"/>
    </location>
</feature>
<feature type="chain" id="PRO_0000071036" description="DnaJ homolog subfamily B member 11">
    <location>
        <begin position="23"/>
        <end position="358"/>
    </location>
</feature>
<feature type="domain" description="J" evidence="3">
    <location>
        <begin position="25"/>
        <end position="90"/>
    </location>
</feature>
<feature type="modified residue" description="Phosphothreonine" evidence="2">
    <location>
        <position position="188"/>
    </location>
</feature>
<feature type="glycosylation site" description="N-linked (GlcNAc...) asparagine" evidence="6">
    <location>
        <position position="261"/>
    </location>
</feature>
<protein>
    <recommendedName>
        <fullName>DnaJ homolog subfamily B member 11</fullName>
    </recommendedName>
    <alternativeName>
        <fullName>ER-associated DNAJ</fullName>
    </alternativeName>
    <alternativeName>
        <fullName>ER-associated Hsp40 co-chaperone</fullName>
    </alternativeName>
    <alternativeName>
        <fullName>Endoplasmic reticulum DNA J domain-containing protein 3</fullName>
        <shortName>ER-resident protein ERdj3</shortName>
        <shortName>ERdj3</shortName>
        <shortName>ERj3p</shortName>
    </alternativeName>
</protein>
<dbReference type="EMBL" id="AAEX02021638">
    <property type="status" value="NOT_ANNOTATED_CDS"/>
    <property type="molecule type" value="Genomic_DNA"/>
</dbReference>
<dbReference type="EMBL" id="AAEX02021639">
    <property type="status" value="NOT_ANNOTATED_CDS"/>
    <property type="molecule type" value="Genomic_DNA"/>
</dbReference>
<dbReference type="RefSeq" id="XP_038301745.1">
    <property type="nucleotide sequence ID" value="XM_038445817.1"/>
</dbReference>
<dbReference type="RefSeq" id="XP_038318598.1">
    <property type="nucleotide sequence ID" value="XM_038462670.1"/>
</dbReference>
<dbReference type="RefSeq" id="XP_038439566.1">
    <property type="nucleotide sequence ID" value="XM_038583638.1"/>
</dbReference>
<dbReference type="SMR" id="P81999"/>
<dbReference type="FunCoup" id="P81999">
    <property type="interactions" value="2157"/>
</dbReference>
<dbReference type="STRING" id="9615.ENSCAFP00000041977"/>
<dbReference type="GlyCosmos" id="P81999">
    <property type="glycosylation" value="1 site, No reported glycans"/>
</dbReference>
<dbReference type="PaxDb" id="9612-ENSCAFP00000019966"/>
<dbReference type="Ensembl" id="ENSCAFT00000021500.5">
    <property type="protein sequence ID" value="ENSCAFP00000019966.5"/>
    <property type="gene ID" value="ENSCAFG00000013546.6"/>
</dbReference>
<dbReference type="Ensembl" id="ENSCAFT00030038402.1">
    <property type="protein sequence ID" value="ENSCAFP00030033502.1"/>
    <property type="gene ID" value="ENSCAFG00030020904.1"/>
</dbReference>
<dbReference type="Ensembl" id="ENSCAFT00040030616.1">
    <property type="protein sequence ID" value="ENSCAFP00040026611.1"/>
    <property type="gene ID" value="ENSCAFG00040016457.1"/>
</dbReference>
<dbReference type="Ensembl" id="ENSCAFT00845036198.1">
    <property type="protein sequence ID" value="ENSCAFP00845028323.1"/>
    <property type="gene ID" value="ENSCAFG00845020542.1"/>
</dbReference>
<dbReference type="GeneID" id="478664"/>
<dbReference type="VEuPathDB" id="HostDB:ENSCAFG00845020542"/>
<dbReference type="VGNC" id="VGNC:53459">
    <property type="gene designation" value="DNAJB11"/>
</dbReference>
<dbReference type="eggNOG" id="KOG0713">
    <property type="taxonomic scope" value="Eukaryota"/>
</dbReference>
<dbReference type="GeneTree" id="ENSGT00940000155792"/>
<dbReference type="InParanoid" id="P81999"/>
<dbReference type="Proteomes" id="UP000002254">
    <property type="component" value="Chromosome 34"/>
</dbReference>
<dbReference type="Proteomes" id="UP000694429">
    <property type="component" value="Chromosome 34"/>
</dbReference>
<dbReference type="Proteomes" id="UP000694542">
    <property type="component" value="Chromosome 34"/>
</dbReference>
<dbReference type="Proteomes" id="UP000805418">
    <property type="component" value="Chromosome 34"/>
</dbReference>
<dbReference type="GO" id="GO:0005788">
    <property type="term" value="C:endoplasmic reticulum lumen"/>
    <property type="evidence" value="ECO:0007669"/>
    <property type="project" value="UniProtKB-SubCell"/>
</dbReference>
<dbReference type="GO" id="GO:0051082">
    <property type="term" value="F:unfolded protein binding"/>
    <property type="evidence" value="ECO:0007669"/>
    <property type="project" value="InterPro"/>
</dbReference>
<dbReference type="GO" id="GO:0006457">
    <property type="term" value="P:protein folding"/>
    <property type="evidence" value="ECO:0007669"/>
    <property type="project" value="InterPro"/>
</dbReference>
<dbReference type="GO" id="GO:0051604">
    <property type="term" value="P:protein maturation"/>
    <property type="evidence" value="ECO:0000250"/>
    <property type="project" value="UniProtKB"/>
</dbReference>
<dbReference type="CDD" id="cd06257">
    <property type="entry name" value="DnaJ"/>
    <property type="match status" value="1"/>
</dbReference>
<dbReference type="CDD" id="cd10747">
    <property type="entry name" value="DnaJ_C"/>
    <property type="match status" value="1"/>
</dbReference>
<dbReference type="FunFam" id="1.10.287.110:FF:000040">
    <property type="entry name" value="dnaJ homolog subfamily B member 11"/>
    <property type="match status" value="1"/>
</dbReference>
<dbReference type="FunFam" id="2.60.260.20:FF:000013">
    <property type="entry name" value="DnaJ subfamily B member 11"/>
    <property type="match status" value="1"/>
</dbReference>
<dbReference type="Gene3D" id="1.10.287.110">
    <property type="entry name" value="DnaJ domain"/>
    <property type="match status" value="1"/>
</dbReference>
<dbReference type="Gene3D" id="2.60.260.20">
    <property type="entry name" value="Urease metallochaperone UreE, N-terminal domain"/>
    <property type="match status" value="2"/>
</dbReference>
<dbReference type="InterPro" id="IPR051736">
    <property type="entry name" value="DnaJ-B11-like"/>
</dbReference>
<dbReference type="InterPro" id="IPR002939">
    <property type="entry name" value="DnaJ_C"/>
</dbReference>
<dbReference type="InterPro" id="IPR001623">
    <property type="entry name" value="DnaJ_domain"/>
</dbReference>
<dbReference type="InterPro" id="IPR018253">
    <property type="entry name" value="DnaJ_domain_CS"/>
</dbReference>
<dbReference type="InterPro" id="IPR008971">
    <property type="entry name" value="HSP40/DnaJ_pept-bd"/>
</dbReference>
<dbReference type="InterPro" id="IPR036869">
    <property type="entry name" value="J_dom_sf"/>
</dbReference>
<dbReference type="PANTHER" id="PTHR44298">
    <property type="entry name" value="DNAJ HOMOLOG SUBFAMILY B MEMBER 11"/>
    <property type="match status" value="1"/>
</dbReference>
<dbReference type="PANTHER" id="PTHR44298:SF1">
    <property type="entry name" value="DNAJ HOMOLOG SUBFAMILY B MEMBER 11"/>
    <property type="match status" value="1"/>
</dbReference>
<dbReference type="Pfam" id="PF00226">
    <property type="entry name" value="DnaJ"/>
    <property type="match status" value="1"/>
</dbReference>
<dbReference type="Pfam" id="PF01556">
    <property type="entry name" value="DnaJ_C"/>
    <property type="match status" value="1"/>
</dbReference>
<dbReference type="PRINTS" id="PR00625">
    <property type="entry name" value="JDOMAIN"/>
</dbReference>
<dbReference type="SMART" id="SM00271">
    <property type="entry name" value="DnaJ"/>
    <property type="match status" value="1"/>
</dbReference>
<dbReference type="SUPFAM" id="SSF46565">
    <property type="entry name" value="Chaperone J-domain"/>
    <property type="match status" value="1"/>
</dbReference>
<dbReference type="SUPFAM" id="SSF49493">
    <property type="entry name" value="HSP40/DnaJ peptide-binding domain"/>
    <property type="match status" value="2"/>
</dbReference>
<dbReference type="PROSITE" id="PS00636">
    <property type="entry name" value="DNAJ_1"/>
    <property type="match status" value="1"/>
</dbReference>
<dbReference type="PROSITE" id="PS50076">
    <property type="entry name" value="DNAJ_2"/>
    <property type="match status" value="1"/>
</dbReference>
<gene>
    <name type="primary">DNAJB11</name>
</gene>
<sequence>MAPQNLGTLCLLLLYLLGAAIAGRDFYKILGVPRSASIKDIKKAYRKLALQLHPDRNPDDPRAQEKFQDLGAAYEVLSDSEKRKQYDTYGEEGLKDGHQSSHGDIFSHFFGDFGFMFGGTPRQQDRNIPRGSDIIVDLEVTLEEVYAGNFVEVVRNKPVARQAPGKRKCNCRQEMRTTQLGPGRFQMTQEVVCDECPNVKLVNEERTLEVEIEPGVRDGMEYPFIGEGEPHVDGEPGDLRFRIKVVKHPIFERRGDDLYTNVTISLVESLVGFDMDITHLDGHKVHISRDKITRPGAKLWKKGEGLPNFDNNNIKGSLIITFDVDFPKEQLTEEAREGIKQLLNQGSVQKVYNGLQGY</sequence>
<keyword id="KW-0143">Chaperone</keyword>
<keyword id="KW-0903">Direct protein sequencing</keyword>
<keyword id="KW-1015">Disulfide bond</keyword>
<keyword id="KW-0256">Endoplasmic reticulum</keyword>
<keyword id="KW-0325">Glycoprotein</keyword>
<keyword id="KW-0597">Phosphoprotein</keyword>
<keyword id="KW-1185">Reference proteome</keyword>
<keyword id="KW-0732">Signal</keyword>
<proteinExistence type="evidence at protein level"/>
<evidence type="ECO:0000250" key="1"/>
<evidence type="ECO:0000250" key="2">
    <source>
        <dbReference type="UniProtKB" id="Q9UBS4"/>
    </source>
</evidence>
<evidence type="ECO:0000255" key="3">
    <source>
        <dbReference type="PROSITE-ProRule" id="PRU00286"/>
    </source>
</evidence>
<evidence type="ECO:0000269" key="4">
    <source>
    </source>
</evidence>
<evidence type="ECO:0000269" key="5">
    <source>
    </source>
</evidence>
<evidence type="ECO:0000305" key="6"/>
<comment type="function">
    <text evidence="2">As a co-chaperone for HSPA5 it is required for proper folding, trafficking or degradation of proteins. Binds directly to both unfolded proteins that are substrates for ERAD and nascent unfolded peptide chains, but dissociates from the HSPA5-unfolded protein complex before folding is completed. May help recruiting HSPA5 and other chaperones to the substrate. Stimulates HSPA5 ATPase activity. It is necessary for maturation and correct trafficking of PKD1.</text>
</comment>
<comment type="subunit">
    <text evidence="1">Part of a large chaperone multiprotein complex comprising DNAJB11, HSP90B1, HSPA5, HYOU, PDIA2, PDIA4, PDIA6, PPIB, SDF2L1, UGGT1 and very small amounts of ERP29, but not, or at very low levels, CALR nor CANX. Binds to denatured substrates in an ATP-independent manner. Interacts via the J domain with HSPA5 in an ATP-dependent manner (By similarity).</text>
</comment>
<comment type="subcellular location">
    <subcellularLocation>
        <location evidence="5">Endoplasmic reticulum lumen</location>
    </subcellularLocation>
</comment>
<comment type="tissue specificity">
    <text>Pancreas.</text>
</comment>
<comment type="PTM">
    <text evidence="1">Contains high-mannose Endo H-sensitive carbohydrates.</text>
</comment>
<comment type="PTM">
    <text evidence="1">Cys-169, Cys-171, Cys-193 and Cys-196 form intramolecular disulfide bonds. The preferential partner for each Cys is not known (By similarity).</text>
</comment>
<organism>
    <name type="scientific">Canis lupus familiaris</name>
    <name type="common">Dog</name>
    <name type="synonym">Canis familiaris</name>
    <dbReference type="NCBI Taxonomy" id="9615"/>
    <lineage>
        <taxon>Eukaryota</taxon>
        <taxon>Metazoa</taxon>
        <taxon>Chordata</taxon>
        <taxon>Craniata</taxon>
        <taxon>Vertebrata</taxon>
        <taxon>Euteleostomi</taxon>
        <taxon>Mammalia</taxon>
        <taxon>Eutheria</taxon>
        <taxon>Laurasiatheria</taxon>
        <taxon>Carnivora</taxon>
        <taxon>Caniformia</taxon>
        <taxon>Canidae</taxon>
        <taxon>Canis</taxon>
    </lineage>
</organism>
<reference key="1">
    <citation type="journal article" date="2005" name="Nature">
        <title>Genome sequence, comparative analysis and haplotype structure of the domestic dog.</title>
        <authorList>
            <person name="Lindblad-Toh K."/>
            <person name="Wade C.M."/>
            <person name="Mikkelsen T.S."/>
            <person name="Karlsson E.K."/>
            <person name="Jaffe D.B."/>
            <person name="Kamal M."/>
            <person name="Clamp M."/>
            <person name="Chang J.L."/>
            <person name="Kulbokas E.J. III"/>
            <person name="Zody M.C."/>
            <person name="Mauceli E."/>
            <person name="Xie X."/>
            <person name="Breen M."/>
            <person name="Wayne R.K."/>
            <person name="Ostrander E.A."/>
            <person name="Ponting C.P."/>
            <person name="Galibert F."/>
            <person name="Smith D.R."/>
            <person name="deJong P.J."/>
            <person name="Kirkness E.F."/>
            <person name="Alvarez P."/>
            <person name="Biagi T."/>
            <person name="Brockman W."/>
            <person name="Butler J."/>
            <person name="Chin C.-W."/>
            <person name="Cook A."/>
            <person name="Cuff J."/>
            <person name="Daly M.J."/>
            <person name="DeCaprio D."/>
            <person name="Gnerre S."/>
            <person name="Grabherr M."/>
            <person name="Kellis M."/>
            <person name="Kleber M."/>
            <person name="Bardeleben C."/>
            <person name="Goodstadt L."/>
            <person name="Heger A."/>
            <person name="Hitte C."/>
            <person name="Kim L."/>
            <person name="Koepfli K.-P."/>
            <person name="Parker H.G."/>
            <person name="Pollinger J.P."/>
            <person name="Searle S.M.J."/>
            <person name="Sutter N.B."/>
            <person name="Thomas R."/>
            <person name="Webber C."/>
            <person name="Baldwin J."/>
            <person name="Abebe A."/>
            <person name="Abouelleil A."/>
            <person name="Aftuck L."/>
            <person name="Ait-Zahra M."/>
            <person name="Aldredge T."/>
            <person name="Allen N."/>
            <person name="An P."/>
            <person name="Anderson S."/>
            <person name="Antoine C."/>
            <person name="Arachchi H."/>
            <person name="Aslam A."/>
            <person name="Ayotte L."/>
            <person name="Bachantsang P."/>
            <person name="Barry A."/>
            <person name="Bayul T."/>
            <person name="Benamara M."/>
            <person name="Berlin A."/>
            <person name="Bessette D."/>
            <person name="Blitshteyn B."/>
            <person name="Bloom T."/>
            <person name="Blye J."/>
            <person name="Boguslavskiy L."/>
            <person name="Bonnet C."/>
            <person name="Boukhgalter B."/>
            <person name="Brown A."/>
            <person name="Cahill P."/>
            <person name="Calixte N."/>
            <person name="Camarata J."/>
            <person name="Cheshatsang Y."/>
            <person name="Chu J."/>
            <person name="Citroen M."/>
            <person name="Collymore A."/>
            <person name="Cooke P."/>
            <person name="Dawoe T."/>
            <person name="Daza R."/>
            <person name="Decktor K."/>
            <person name="DeGray S."/>
            <person name="Dhargay N."/>
            <person name="Dooley K."/>
            <person name="Dooley K."/>
            <person name="Dorje P."/>
            <person name="Dorjee K."/>
            <person name="Dorris L."/>
            <person name="Duffey N."/>
            <person name="Dupes A."/>
            <person name="Egbiremolen O."/>
            <person name="Elong R."/>
            <person name="Falk J."/>
            <person name="Farina A."/>
            <person name="Faro S."/>
            <person name="Ferguson D."/>
            <person name="Ferreira P."/>
            <person name="Fisher S."/>
            <person name="FitzGerald M."/>
            <person name="Foley K."/>
            <person name="Foley C."/>
            <person name="Franke A."/>
            <person name="Friedrich D."/>
            <person name="Gage D."/>
            <person name="Garber M."/>
            <person name="Gearin G."/>
            <person name="Giannoukos G."/>
            <person name="Goode T."/>
            <person name="Goyette A."/>
            <person name="Graham J."/>
            <person name="Grandbois E."/>
            <person name="Gyaltsen K."/>
            <person name="Hafez N."/>
            <person name="Hagopian D."/>
            <person name="Hagos B."/>
            <person name="Hall J."/>
            <person name="Healy C."/>
            <person name="Hegarty R."/>
            <person name="Honan T."/>
            <person name="Horn A."/>
            <person name="Houde N."/>
            <person name="Hughes L."/>
            <person name="Hunnicutt L."/>
            <person name="Husby M."/>
            <person name="Jester B."/>
            <person name="Jones C."/>
            <person name="Kamat A."/>
            <person name="Kanga B."/>
            <person name="Kells C."/>
            <person name="Khazanovich D."/>
            <person name="Kieu A.C."/>
            <person name="Kisner P."/>
            <person name="Kumar M."/>
            <person name="Lance K."/>
            <person name="Landers T."/>
            <person name="Lara M."/>
            <person name="Lee W."/>
            <person name="Leger J.-P."/>
            <person name="Lennon N."/>
            <person name="Leuper L."/>
            <person name="LeVine S."/>
            <person name="Liu J."/>
            <person name="Liu X."/>
            <person name="Lokyitsang Y."/>
            <person name="Lokyitsang T."/>
            <person name="Lui A."/>
            <person name="Macdonald J."/>
            <person name="Major J."/>
            <person name="Marabella R."/>
            <person name="Maru K."/>
            <person name="Matthews C."/>
            <person name="McDonough S."/>
            <person name="Mehta T."/>
            <person name="Meldrim J."/>
            <person name="Melnikov A."/>
            <person name="Meneus L."/>
            <person name="Mihalev A."/>
            <person name="Mihova T."/>
            <person name="Miller K."/>
            <person name="Mittelman R."/>
            <person name="Mlenga V."/>
            <person name="Mulrain L."/>
            <person name="Munson G."/>
            <person name="Navidi A."/>
            <person name="Naylor J."/>
            <person name="Nguyen T."/>
            <person name="Nguyen N."/>
            <person name="Nguyen C."/>
            <person name="Nguyen T."/>
            <person name="Nicol R."/>
            <person name="Norbu N."/>
            <person name="Norbu C."/>
            <person name="Novod N."/>
            <person name="Nyima T."/>
            <person name="Olandt P."/>
            <person name="O'Neill B."/>
            <person name="O'Neill K."/>
            <person name="Osman S."/>
            <person name="Oyono L."/>
            <person name="Patti C."/>
            <person name="Perrin D."/>
            <person name="Phunkhang P."/>
            <person name="Pierre F."/>
            <person name="Priest M."/>
            <person name="Rachupka A."/>
            <person name="Raghuraman S."/>
            <person name="Rameau R."/>
            <person name="Ray V."/>
            <person name="Raymond C."/>
            <person name="Rege F."/>
            <person name="Rise C."/>
            <person name="Rogers J."/>
            <person name="Rogov P."/>
            <person name="Sahalie J."/>
            <person name="Settipalli S."/>
            <person name="Sharpe T."/>
            <person name="Shea T."/>
            <person name="Sheehan M."/>
            <person name="Sherpa N."/>
            <person name="Shi J."/>
            <person name="Shih D."/>
            <person name="Sloan J."/>
            <person name="Smith C."/>
            <person name="Sparrow T."/>
            <person name="Stalker J."/>
            <person name="Stange-Thomann N."/>
            <person name="Stavropoulos S."/>
            <person name="Stone C."/>
            <person name="Stone S."/>
            <person name="Sykes S."/>
            <person name="Tchuinga P."/>
            <person name="Tenzing P."/>
            <person name="Tesfaye S."/>
            <person name="Thoulutsang D."/>
            <person name="Thoulutsang Y."/>
            <person name="Topham K."/>
            <person name="Topping I."/>
            <person name="Tsamla T."/>
            <person name="Vassiliev H."/>
            <person name="Venkataraman V."/>
            <person name="Vo A."/>
            <person name="Wangchuk T."/>
            <person name="Wangdi T."/>
            <person name="Weiand M."/>
            <person name="Wilkinson J."/>
            <person name="Wilson A."/>
            <person name="Yadav S."/>
            <person name="Yang S."/>
            <person name="Yang X."/>
            <person name="Young G."/>
            <person name="Yu Q."/>
            <person name="Zainoun J."/>
            <person name="Zembek L."/>
            <person name="Zimmer A."/>
            <person name="Lander E.S."/>
        </authorList>
    </citation>
    <scope>NUCLEOTIDE SEQUENCE [LARGE SCALE GENOMIC DNA]</scope>
    <source>
        <strain>Boxer</strain>
    </source>
</reference>
<reference key="2">
    <citation type="journal article" date="1999" name="Biol. Chem.">
        <title>A Scj1p homolog and folding catalysts present in dog pancreas microsomes.</title>
        <authorList>
            <person name="Bies C."/>
            <person name="Guth S."/>
            <person name="Janoschek K."/>
            <person name="Nastainczyk W."/>
            <person name="Volkmer J."/>
            <person name="Zimmermann R."/>
        </authorList>
    </citation>
    <scope>PROTEIN SEQUENCE OF 23-45; 220-233 AND 275-285</scope>
    <source>
        <tissue>Pancreas</tissue>
    </source>
</reference>
<reference key="3">
    <citation type="journal article" date="2004" name="Biol. Chem.">
        <title>Characterization of pancreatic ERj3p, a homolog of yeast DnaJ-like protein Scj1p.</title>
        <authorList>
            <person name="Bies C."/>
            <person name="Blum R."/>
            <person name="Dudek J."/>
            <person name="Nastainczyk W."/>
            <person name="Oberhauser S."/>
            <person name="Jung M."/>
            <person name="Zimmermann R."/>
        </authorList>
    </citation>
    <scope>SUBCELLULAR LOCATION</scope>
    <scope>INTERACTION WITH HSPA5 AND SDF2L1</scope>
</reference>
<name>DJB11_CANLF</name>
<accession>P81999</accession>